<dbReference type="EMBL" id="D21164">
    <property type="protein sequence ID" value="BAA04700.1"/>
    <property type="molecule type" value="mRNA"/>
</dbReference>
<dbReference type="EMBL" id="U18796">
    <property type="protein sequence ID" value="AAB64583.1"/>
    <property type="molecule type" value="Genomic_DNA"/>
</dbReference>
<dbReference type="EMBL" id="BK006939">
    <property type="protein sequence ID" value="DAA07703.1"/>
    <property type="molecule type" value="Genomic_DNA"/>
</dbReference>
<dbReference type="PIR" id="S48085">
    <property type="entry name" value="S48085"/>
</dbReference>
<dbReference type="RefSeq" id="NP_010967.3">
    <property type="nucleotide sequence ID" value="NM_001178939.3"/>
</dbReference>
<dbReference type="SMR" id="P39101"/>
<dbReference type="BioGRID" id="36785">
    <property type="interactions" value="312"/>
</dbReference>
<dbReference type="DIP" id="DIP-5333N"/>
<dbReference type="FunCoup" id="P39101">
    <property type="interactions" value="235"/>
</dbReference>
<dbReference type="IntAct" id="P39101">
    <property type="interactions" value="14"/>
</dbReference>
<dbReference type="MINT" id="P39101"/>
<dbReference type="STRING" id="4932.YER048C"/>
<dbReference type="GlyGen" id="P39101">
    <property type="glycosylation" value="2 sites, 1 O-linked glycan (2 sites)"/>
</dbReference>
<dbReference type="iPTMnet" id="P39101"/>
<dbReference type="PaxDb" id="4932-YER048C"/>
<dbReference type="PeptideAtlas" id="P39101"/>
<dbReference type="EnsemblFungi" id="YER048C_mRNA">
    <property type="protein sequence ID" value="YER048C"/>
    <property type="gene ID" value="YER048C"/>
</dbReference>
<dbReference type="GeneID" id="856772"/>
<dbReference type="KEGG" id="sce:YER048C"/>
<dbReference type="AGR" id="SGD:S000000850"/>
<dbReference type="SGD" id="S000000850">
    <property type="gene designation" value="CAJ1"/>
</dbReference>
<dbReference type="VEuPathDB" id="FungiDB:YER048C"/>
<dbReference type="eggNOG" id="KOG0691">
    <property type="taxonomic scope" value="Eukaryota"/>
</dbReference>
<dbReference type="GeneTree" id="ENSGT00940000176532"/>
<dbReference type="HOGENOM" id="CLU_025145_3_1_1"/>
<dbReference type="InParanoid" id="P39101"/>
<dbReference type="OMA" id="DMKIESF"/>
<dbReference type="OrthoDB" id="552049at2759"/>
<dbReference type="BioCyc" id="YEAST:G3O-30227-MONOMER"/>
<dbReference type="BioGRID-ORCS" id="856772">
    <property type="hits" value="2 hits in 10 CRISPR screens"/>
</dbReference>
<dbReference type="PRO" id="PR:P39101"/>
<dbReference type="Proteomes" id="UP000002311">
    <property type="component" value="Chromosome V"/>
</dbReference>
<dbReference type="RNAct" id="P39101">
    <property type="molecule type" value="protein"/>
</dbReference>
<dbReference type="GO" id="GO:0005829">
    <property type="term" value="C:cytosol"/>
    <property type="evidence" value="ECO:0000314"/>
    <property type="project" value="SGD"/>
</dbReference>
<dbReference type="GO" id="GO:0005634">
    <property type="term" value="C:nucleus"/>
    <property type="evidence" value="ECO:0007005"/>
    <property type="project" value="SGD"/>
</dbReference>
<dbReference type="GO" id="GO:0005886">
    <property type="term" value="C:plasma membrane"/>
    <property type="evidence" value="ECO:0000314"/>
    <property type="project" value="SGD"/>
</dbReference>
<dbReference type="GO" id="GO:1901981">
    <property type="term" value="F:phosphatidylinositol phosphate binding"/>
    <property type="evidence" value="ECO:0000314"/>
    <property type="project" value="SGD"/>
</dbReference>
<dbReference type="GO" id="GO:0006457">
    <property type="term" value="P:protein folding"/>
    <property type="evidence" value="ECO:0000250"/>
    <property type="project" value="SGD"/>
</dbReference>
<dbReference type="GO" id="GO:0016558">
    <property type="term" value="P:protein import into peroxisome matrix"/>
    <property type="evidence" value="ECO:0000318"/>
    <property type="project" value="GO_Central"/>
</dbReference>
<dbReference type="CDD" id="cd06257">
    <property type="entry name" value="DnaJ"/>
    <property type="match status" value="1"/>
</dbReference>
<dbReference type="FunFam" id="1.10.287.110:FF:000028">
    <property type="entry name" value="DnaJ domain protein"/>
    <property type="match status" value="1"/>
</dbReference>
<dbReference type="Gene3D" id="1.10.287.110">
    <property type="entry name" value="DnaJ domain"/>
    <property type="match status" value="1"/>
</dbReference>
<dbReference type="InterPro" id="IPR001623">
    <property type="entry name" value="DnaJ_domain"/>
</dbReference>
<dbReference type="InterPro" id="IPR018253">
    <property type="entry name" value="DnaJ_domain_CS"/>
</dbReference>
<dbReference type="InterPro" id="IPR026894">
    <property type="entry name" value="DnaJ_X"/>
</dbReference>
<dbReference type="InterPro" id="IPR036869">
    <property type="entry name" value="J_dom_sf"/>
</dbReference>
<dbReference type="InterPro" id="IPR052814">
    <property type="entry name" value="Peroxisomal_DnaJ"/>
</dbReference>
<dbReference type="PANTHER" id="PTHR45006">
    <property type="entry name" value="DNAJ-LIKE PROTEIN 1"/>
    <property type="match status" value="1"/>
</dbReference>
<dbReference type="PANTHER" id="PTHR45006:SF2">
    <property type="entry name" value="PROTEIN CAJ1"/>
    <property type="match status" value="1"/>
</dbReference>
<dbReference type="Pfam" id="PF00226">
    <property type="entry name" value="DnaJ"/>
    <property type="match status" value="1"/>
</dbReference>
<dbReference type="Pfam" id="PF14308">
    <property type="entry name" value="DnaJ-X"/>
    <property type="match status" value="1"/>
</dbReference>
<dbReference type="PRINTS" id="PR00625">
    <property type="entry name" value="JDOMAIN"/>
</dbReference>
<dbReference type="SMART" id="SM00271">
    <property type="entry name" value="DnaJ"/>
    <property type="match status" value="1"/>
</dbReference>
<dbReference type="SUPFAM" id="SSF46565">
    <property type="entry name" value="Chaperone J-domain"/>
    <property type="match status" value="1"/>
</dbReference>
<dbReference type="PROSITE" id="PS00636">
    <property type="entry name" value="DNAJ_1"/>
    <property type="match status" value="1"/>
</dbReference>
<dbReference type="PROSITE" id="PS50076">
    <property type="entry name" value="DNAJ_2"/>
    <property type="match status" value="1"/>
</dbReference>
<feature type="chain" id="PRO_0000071119" description="Protein CAJ1">
    <location>
        <begin position="1"/>
        <end position="391"/>
    </location>
</feature>
<feature type="domain" description="J" evidence="1">
    <location>
        <begin position="4"/>
        <end position="73"/>
    </location>
</feature>
<feature type="region of interest" description="Disordered" evidence="2">
    <location>
        <begin position="119"/>
        <end position="161"/>
    </location>
</feature>
<feature type="compositionally biased region" description="Basic and acidic residues" evidence="2">
    <location>
        <begin position="129"/>
        <end position="161"/>
    </location>
</feature>
<feature type="cross-link" description="Glycyl lysine isopeptide (Lys-Gly) (interchain with G-Cter in ubiquitin)" evidence="3">
    <location>
        <position position="132"/>
    </location>
</feature>
<protein>
    <recommendedName>
        <fullName>Protein CAJ1</fullName>
    </recommendedName>
</protein>
<gene>
    <name type="primary">CAJ1</name>
    <name type="ordered locus">YER048C</name>
</gene>
<reference key="1">
    <citation type="journal article" date="1994" name="Gene">
        <title>Isolation and characterization of CAJ1, a novel yeast homolog of dnaJ.</title>
        <authorList>
            <person name="Mukai H."/>
            <person name="Shuntoh H."/>
            <person name="Chang C.-D."/>
            <person name="Asami M."/>
            <person name="Ueno M."/>
            <person name="Suzuki K."/>
            <person name="Kuno T."/>
        </authorList>
    </citation>
    <scope>NUCLEOTIDE SEQUENCE [MRNA]</scope>
    <source>
        <strain>ATCC 204626 / S288c / A364A</strain>
    </source>
</reference>
<reference key="2">
    <citation type="journal article" date="1997" name="Nature">
        <title>The nucleotide sequence of Saccharomyces cerevisiae chromosome V.</title>
        <authorList>
            <person name="Dietrich F.S."/>
            <person name="Mulligan J.T."/>
            <person name="Hennessy K.M."/>
            <person name="Yelton M.A."/>
            <person name="Allen E."/>
            <person name="Araujo R."/>
            <person name="Aviles E."/>
            <person name="Berno A."/>
            <person name="Brennan T."/>
            <person name="Carpenter J."/>
            <person name="Chen E."/>
            <person name="Cherry J.M."/>
            <person name="Chung E."/>
            <person name="Duncan M."/>
            <person name="Guzman E."/>
            <person name="Hartzell G."/>
            <person name="Hunicke-Smith S."/>
            <person name="Hyman R.W."/>
            <person name="Kayser A."/>
            <person name="Komp C."/>
            <person name="Lashkari D."/>
            <person name="Lew H."/>
            <person name="Lin D."/>
            <person name="Mosedale D."/>
            <person name="Nakahara K."/>
            <person name="Namath A."/>
            <person name="Norgren R."/>
            <person name="Oefner P."/>
            <person name="Oh C."/>
            <person name="Petel F.X."/>
            <person name="Roberts D."/>
            <person name="Sehl P."/>
            <person name="Schramm S."/>
            <person name="Shogren T."/>
            <person name="Smith V."/>
            <person name="Taylor P."/>
            <person name="Wei Y."/>
            <person name="Botstein D."/>
            <person name="Davis R.W."/>
        </authorList>
    </citation>
    <scope>NUCLEOTIDE SEQUENCE [LARGE SCALE GENOMIC DNA]</scope>
    <source>
        <strain>ATCC 204508 / S288c</strain>
    </source>
</reference>
<reference key="3">
    <citation type="journal article" date="2014" name="G3 (Bethesda)">
        <title>The reference genome sequence of Saccharomyces cerevisiae: Then and now.</title>
        <authorList>
            <person name="Engel S.R."/>
            <person name="Dietrich F.S."/>
            <person name="Fisk D.G."/>
            <person name="Binkley G."/>
            <person name="Balakrishnan R."/>
            <person name="Costanzo M.C."/>
            <person name="Dwight S.S."/>
            <person name="Hitz B.C."/>
            <person name="Karra K."/>
            <person name="Nash R.S."/>
            <person name="Weng S."/>
            <person name="Wong E.D."/>
            <person name="Lloyd P."/>
            <person name="Skrzypek M.S."/>
            <person name="Miyasato S.R."/>
            <person name="Simison M."/>
            <person name="Cherry J.M."/>
        </authorList>
    </citation>
    <scope>GENOME REANNOTATION</scope>
    <source>
        <strain>ATCC 204508 / S288c</strain>
    </source>
</reference>
<reference key="4">
    <citation type="journal article" date="2009" name="Science">
        <title>Global analysis of Cdk1 substrate phosphorylation sites provides insights into evolution.</title>
        <authorList>
            <person name="Holt L.J."/>
            <person name="Tuch B.B."/>
            <person name="Villen J."/>
            <person name="Johnson A.D."/>
            <person name="Gygi S.P."/>
            <person name="Morgan D.O."/>
        </authorList>
    </citation>
    <scope>IDENTIFICATION BY MASS SPECTROMETRY [LARGE SCALE ANALYSIS]</scope>
</reference>
<reference key="5">
    <citation type="journal article" date="2012" name="Proteomics">
        <title>Sites of ubiquitin attachment in Saccharomyces cerevisiae.</title>
        <authorList>
            <person name="Starita L.M."/>
            <person name="Lo R.S."/>
            <person name="Eng J.K."/>
            <person name="von Haller P.D."/>
            <person name="Fields S."/>
        </authorList>
    </citation>
    <scope>UBIQUITINATION [LARGE SCALE ANALYSIS] AT LYS-132</scope>
    <scope>IDENTIFICATION BY MASS SPECTROMETRY [LARGE SCALE ANALYSIS]</scope>
</reference>
<evidence type="ECO:0000255" key="1">
    <source>
        <dbReference type="PROSITE-ProRule" id="PRU00286"/>
    </source>
</evidence>
<evidence type="ECO:0000256" key="2">
    <source>
        <dbReference type="SAM" id="MobiDB-lite"/>
    </source>
</evidence>
<evidence type="ECO:0007744" key="3">
    <source>
    </source>
</evidence>
<name>CAJ1_YEAST</name>
<organism>
    <name type="scientific">Saccharomyces cerevisiae (strain ATCC 204508 / S288c)</name>
    <name type="common">Baker's yeast</name>
    <dbReference type="NCBI Taxonomy" id="559292"/>
    <lineage>
        <taxon>Eukaryota</taxon>
        <taxon>Fungi</taxon>
        <taxon>Dikarya</taxon>
        <taxon>Ascomycota</taxon>
        <taxon>Saccharomycotina</taxon>
        <taxon>Saccharomycetes</taxon>
        <taxon>Saccharomycetales</taxon>
        <taxon>Saccharomycetaceae</taxon>
        <taxon>Saccharomyces</taxon>
    </lineage>
</organism>
<keyword id="KW-0143">Chaperone</keyword>
<keyword id="KW-1017">Isopeptide bond</keyword>
<keyword id="KW-1185">Reference proteome</keyword>
<keyword id="KW-0832">Ubl conjugation</keyword>
<sequence>MVKETEYYDILGIKPEATPTEIKKAYRRKAMETHPDKHPDDPDAQAKFQAVGEAYQVLSDPGLRSKYDQFGKEDAVPQQGFEDASEYFTAIFGGDGFKDWIGEFSLFKELNEATEMFGKEDEEGTAATETEKADESTDGGMVKHDTNKAESLKKDKLSKEQREKLMEMEKKRREDMMKQVDELAEKLNEKISRYLIAVKSNNLEEFTRKLDQEIEDLKLESFGLELLYLLARVYKTKANNFIMSKKTYGISKIFTGTRDNARSVKSAYNLLSTGLEAQKAMEKMSEVNTDELDQYERAKFESTMAGKALGVMWAMSKFELERKLKDVCNKILNDKKVPSKERIAKAKAMLFIAHKFASARRSPEEAEEARVFEELILGEQEKEHKKHTVAR</sequence>
<proteinExistence type="evidence at protein level"/>
<accession>P39101</accession>
<accession>D3DLU9</accession>